<feature type="chain" id="PRO_0000182693" description="Gas vesicle protein K">
    <location>
        <begin position="1"/>
        <end position="155"/>
    </location>
</feature>
<proteinExistence type="evidence at protein level"/>
<accession>Q8YUT2</accession>
<comment type="function">
    <text evidence="1">Might be involved in nucleating gas vesicle formation (By similarity). Gas vesicles (GV) are hollow, gas filled proteinaceous nanostructures. During planktonic growth they allow positioning of the organism at a favorable depth for light or nutrient acquisition.</text>
</comment>
<comment type="function">
    <text evidence="2">Cluster expression in E.coli (gvpA1-gvpA2-gvpC-gvpN-gvpJ-gvpK-gvpF-gvpG-gvpV-gvpW) allows cells to float and produces irregularly shaped gas vesicles.</text>
</comment>
<comment type="subcellular location">
    <subcellularLocation>
        <location evidence="4">Gas vesicle</location>
    </subcellularLocation>
</comment>
<comment type="similarity">
    <text evidence="4">Belongs to the gas vesicle GvpK family.</text>
</comment>
<comment type="caution">
    <text evidence="2">Despite the presence of an intact gas vesicle cluster and gvpA transcripts, there is no evidence this strain produces gas vesicles.</text>
</comment>
<sequence length="155" mass="16948">MVCTPVEKSPNLLPTTSKANSKAGLAPLLLTVVELIRQLMEAQVIRRMEQDCLSESELEQASESLQKLEEQVLNLCHIFEIEPADLNINLGDVGTLLPSPGSYYPGEIGNKPSVLELLDRLLNTGIVVDGEIDLGLAQLNLIHAKLRLVLTSRPL</sequence>
<protein>
    <recommendedName>
        <fullName>Gas vesicle protein K</fullName>
        <shortName evidence="3">GvpK</shortName>
    </recommendedName>
</protein>
<reference key="1">
    <citation type="journal article" date="2001" name="DNA Res.">
        <title>Complete genomic sequence of the filamentous nitrogen-fixing cyanobacterium Anabaena sp. strain PCC 7120.</title>
        <authorList>
            <person name="Kaneko T."/>
            <person name="Nakamura Y."/>
            <person name="Wolk C.P."/>
            <person name="Kuritz T."/>
            <person name="Sasamoto S."/>
            <person name="Watanabe A."/>
            <person name="Iriguchi M."/>
            <person name="Ishikawa A."/>
            <person name="Kawashima K."/>
            <person name="Kimura T."/>
            <person name="Kishida Y."/>
            <person name="Kohara M."/>
            <person name="Matsumoto M."/>
            <person name="Matsuno A."/>
            <person name="Muraki A."/>
            <person name="Nakazaki N."/>
            <person name="Shimpo S."/>
            <person name="Sugimoto M."/>
            <person name="Takazawa M."/>
            <person name="Yamada M."/>
            <person name="Yasuda M."/>
            <person name="Tabata S."/>
        </authorList>
    </citation>
    <scope>NUCLEOTIDE SEQUENCE [LARGE SCALE GENOMIC DNA]</scope>
    <source>
        <strain>PCC 7120 / SAG 25.82 / UTEX 2576</strain>
    </source>
</reference>
<reference key="2">
    <citation type="journal article" date="2020" name="BMC Microbiol.">
        <title>The model cyanobacteria Anabaena sp. PCC 7120 possess an intact but partially degenerated gene cluster encoding gas vesicles.</title>
        <authorList>
            <person name="Cai K."/>
            <person name="Xu B.Y."/>
            <person name="Jiang Y.L."/>
            <person name="Wang Y."/>
            <person name="Chen Y."/>
            <person name="Zhou C.Z."/>
            <person name="Li Q."/>
        </authorList>
    </citation>
    <scope>LACK OF GAS VESICLES IN VIVO</scope>
    <scope>FUNCTION IN E.COLI</scope>
    <source>
        <strain>PCC 7120 / SAG 25.82 / UTEX 2576</strain>
    </source>
</reference>
<keyword id="KW-0304">Gas vesicle</keyword>
<keyword id="KW-1185">Reference proteome</keyword>
<gene>
    <name evidence="3" type="primary">gvpK</name>
    <name type="ordered locus">all2249</name>
</gene>
<organism>
    <name type="scientific">Nostoc sp. (strain PCC 7120 / SAG 25.82 / UTEX 2576)</name>
    <dbReference type="NCBI Taxonomy" id="103690"/>
    <lineage>
        <taxon>Bacteria</taxon>
        <taxon>Bacillati</taxon>
        <taxon>Cyanobacteriota</taxon>
        <taxon>Cyanophyceae</taxon>
        <taxon>Nostocales</taxon>
        <taxon>Nostocaceae</taxon>
        <taxon>Nostoc</taxon>
    </lineage>
</organism>
<dbReference type="EMBL" id="BA000019">
    <property type="protein sequence ID" value="BAB73948.1"/>
    <property type="molecule type" value="Genomic_DNA"/>
</dbReference>
<dbReference type="PIR" id="AB2087">
    <property type="entry name" value="AB2087"/>
</dbReference>
<dbReference type="STRING" id="103690.gene:10494278"/>
<dbReference type="KEGG" id="ana:all2249"/>
<dbReference type="eggNOG" id="ENOG50330IR">
    <property type="taxonomic scope" value="Bacteria"/>
</dbReference>
<dbReference type="OrthoDB" id="368044at2"/>
<dbReference type="Proteomes" id="UP000002483">
    <property type="component" value="Chromosome"/>
</dbReference>
<dbReference type="GO" id="GO:0031411">
    <property type="term" value="C:gas vesicle"/>
    <property type="evidence" value="ECO:0007669"/>
    <property type="project" value="UniProtKB-SubCell"/>
</dbReference>
<dbReference type="GO" id="GO:0012506">
    <property type="term" value="C:vesicle membrane"/>
    <property type="evidence" value="ECO:0007669"/>
    <property type="project" value="InterPro"/>
</dbReference>
<dbReference type="GO" id="GO:0005198">
    <property type="term" value="F:structural molecule activity"/>
    <property type="evidence" value="ECO:0007669"/>
    <property type="project" value="InterPro"/>
</dbReference>
<dbReference type="GO" id="GO:0031412">
    <property type="term" value="P:gas vesicle organization"/>
    <property type="evidence" value="ECO:0007669"/>
    <property type="project" value="InterPro"/>
</dbReference>
<dbReference type="InterPro" id="IPR000638">
    <property type="entry name" value="Gas-vesicle_GvpA-like"/>
</dbReference>
<dbReference type="InterPro" id="IPR007805">
    <property type="entry name" value="GvpK"/>
</dbReference>
<dbReference type="PANTHER" id="PTHR40137">
    <property type="entry name" value="PROTEIN GVPK 1"/>
    <property type="match status" value="1"/>
</dbReference>
<dbReference type="PANTHER" id="PTHR40137:SF2">
    <property type="entry name" value="PROTEIN GVPK 1"/>
    <property type="match status" value="1"/>
</dbReference>
<dbReference type="Pfam" id="PF00741">
    <property type="entry name" value="Gas_vesicle"/>
    <property type="match status" value="1"/>
</dbReference>
<dbReference type="Pfam" id="PF05121">
    <property type="entry name" value="GvpK"/>
    <property type="match status" value="1"/>
</dbReference>
<evidence type="ECO:0000250" key="1">
    <source>
        <dbReference type="UniProtKB" id="P24375"/>
    </source>
</evidence>
<evidence type="ECO:0000269" key="2">
    <source>
    </source>
</evidence>
<evidence type="ECO:0000303" key="3">
    <source>
    </source>
</evidence>
<evidence type="ECO:0000305" key="4"/>
<name>GVPK_NOSS1</name>